<proteinExistence type="evidence at protein level"/>
<evidence type="ECO:0000269" key="1">
    <source>
    </source>
</evidence>
<evidence type="ECO:0000269" key="2">
    <source>
    </source>
</evidence>
<evidence type="ECO:0000269" key="3">
    <source>
    </source>
</evidence>
<evidence type="ECO:0000269" key="4">
    <source>
    </source>
</evidence>
<evidence type="ECO:0000269" key="5">
    <source>
    </source>
</evidence>
<evidence type="ECO:0000269" key="6">
    <source>
    </source>
</evidence>
<evidence type="ECO:0000269" key="7">
    <source>
    </source>
</evidence>
<evidence type="ECO:0000269" key="8">
    <source>
    </source>
</evidence>
<evidence type="ECO:0000269" key="9">
    <source>
    </source>
</evidence>
<evidence type="ECO:0000269" key="10">
    <source>
    </source>
</evidence>
<evidence type="ECO:0000269" key="11">
    <source>
    </source>
</evidence>
<evidence type="ECO:0000269" key="12">
    <source>
    </source>
</evidence>
<evidence type="ECO:0000269" key="13">
    <source>
    </source>
</evidence>
<evidence type="ECO:0000305" key="14"/>
<evidence type="ECO:0007829" key="15">
    <source>
        <dbReference type="PDB" id="6RKO"/>
    </source>
</evidence>
<evidence type="ECO:0007829" key="16">
    <source>
        <dbReference type="PDB" id="6RX4"/>
    </source>
</evidence>
<accession>P0ABK2</accession>
<accession>P11027</accession>
<sequence length="379" mass="42453">MIDYEVLRFIWWLLVGVLLIGFAVTDGFDMGVGMLTRFLGRNDTERRIMINSIAPHWDGNQVWLITAGGALFAAWPMVYAAAFSGFYVAMILVLASLFFRPVGFDYRSKIEETRWRNMWDWGIFIGSFVPPLVIGVAFGNLLQGVPFNVDEYLRLYYTGNFFQLLNPFGLLAGVVSVGMIITQGATYLQMRTVGELHLRTRATAQVAALVTLVCFALAGVWVMYGIDGYVVKSTMDHYAASNPLNKEVVREAGAWLVNFNNTPILWAIPALGVVLPLLTILTARMDKAAWAFVFSSLTLACIILTAGIAMFPFVMPSSTMMNASLTMWDATSSQLTLNVMTWVAVVLVPIILLYTAWCYWKMFGRITKEDIERNTHSLY</sequence>
<protein>
    <recommendedName>
        <fullName>Cytochrome bd-I ubiquinol oxidase subunit 2</fullName>
        <ecNumber evidence="4">7.1.1.7</ecNumber>
    </recommendedName>
    <alternativeName>
        <fullName>Cytochrome bd-I oxidase subunit II</fullName>
    </alternativeName>
    <alternativeName>
        <fullName>Cytochrome d ubiquinol oxidase subunit II</fullName>
    </alternativeName>
</protein>
<keyword id="KW-0002">3D-structure</keyword>
<keyword id="KW-0997">Cell inner membrane</keyword>
<keyword id="KW-1003">Cell membrane</keyword>
<keyword id="KW-0903">Direct protein sequencing</keyword>
<keyword id="KW-0249">Electron transport</keyword>
<keyword id="KW-0291">Formylation</keyword>
<keyword id="KW-0349">Heme</keyword>
<keyword id="KW-0408">Iron</keyword>
<keyword id="KW-0472">Membrane</keyword>
<keyword id="KW-0479">Metal-binding</keyword>
<keyword id="KW-1185">Reference proteome</keyword>
<keyword id="KW-1278">Translocase</keyword>
<keyword id="KW-0812">Transmembrane</keyword>
<keyword id="KW-1133">Transmembrane helix</keyword>
<keyword id="KW-0813">Transport</keyword>
<dbReference type="EC" id="7.1.1.7" evidence="4"/>
<dbReference type="EMBL" id="J03939">
    <property type="protein sequence ID" value="AAA18805.1"/>
    <property type="molecule type" value="Unassigned_DNA"/>
</dbReference>
<dbReference type="EMBL" id="U00096">
    <property type="protein sequence ID" value="AAC73828.1"/>
    <property type="molecule type" value="Genomic_DNA"/>
</dbReference>
<dbReference type="EMBL" id="AP009048">
    <property type="protein sequence ID" value="BAA35400.1"/>
    <property type="molecule type" value="Genomic_DNA"/>
</dbReference>
<dbReference type="EMBL" id="U30934">
    <property type="protein sequence ID" value="AAA74397.1"/>
    <property type="molecule type" value="Genomic_DNA"/>
</dbReference>
<dbReference type="PIR" id="B28940">
    <property type="entry name" value="B28940"/>
</dbReference>
<dbReference type="RefSeq" id="NP_415262.1">
    <property type="nucleotide sequence ID" value="NC_000913.3"/>
</dbReference>
<dbReference type="RefSeq" id="WP_000568275.1">
    <property type="nucleotide sequence ID" value="NZ_STEB01000035.1"/>
</dbReference>
<dbReference type="PDB" id="6RKO">
    <property type="method" value="EM"/>
    <property type="resolution" value="2.68 A"/>
    <property type="chains" value="B=1-379"/>
</dbReference>
<dbReference type="PDB" id="6RX4">
    <property type="method" value="EM"/>
    <property type="resolution" value="3.30 A"/>
    <property type="chains" value="B=1-379"/>
</dbReference>
<dbReference type="PDBsum" id="6RKO"/>
<dbReference type="PDBsum" id="6RX4"/>
<dbReference type="EMDB" id="EMD-10049"/>
<dbReference type="EMDB" id="EMD-4908"/>
<dbReference type="SMR" id="P0ABK2"/>
<dbReference type="BioGRID" id="4263540">
    <property type="interactions" value="447"/>
</dbReference>
<dbReference type="ComplexPortal" id="CPX-268">
    <property type="entry name" value="Cytochrome bd-I ubiquinol oxidase complex"/>
</dbReference>
<dbReference type="FunCoup" id="P0ABK2">
    <property type="interactions" value="422"/>
</dbReference>
<dbReference type="IntAct" id="P0ABK2">
    <property type="interactions" value="2"/>
</dbReference>
<dbReference type="MINT" id="P0ABK2"/>
<dbReference type="STRING" id="511145.b0734"/>
<dbReference type="TCDB" id="3.D.4.3.2">
    <property type="family name" value="the proton-translocating cytochrome oxidase (cox) superfamily"/>
</dbReference>
<dbReference type="jPOST" id="P0ABK2"/>
<dbReference type="PaxDb" id="511145-b0734"/>
<dbReference type="EnsemblBacteria" id="AAC73828">
    <property type="protein sequence ID" value="AAC73828"/>
    <property type="gene ID" value="b0734"/>
</dbReference>
<dbReference type="GeneID" id="93776751"/>
<dbReference type="GeneID" id="945347"/>
<dbReference type="KEGG" id="ecj:JW0723"/>
<dbReference type="KEGG" id="eco:b0734"/>
<dbReference type="KEGG" id="ecoc:C3026_03680"/>
<dbReference type="PATRIC" id="fig|1411691.4.peg.1539"/>
<dbReference type="EchoBASE" id="EB0171"/>
<dbReference type="eggNOG" id="COG1294">
    <property type="taxonomic scope" value="Bacteria"/>
</dbReference>
<dbReference type="HOGENOM" id="CLU_049294_0_0_6"/>
<dbReference type="InParanoid" id="P0ABK2"/>
<dbReference type="OMA" id="FLPQVWF"/>
<dbReference type="OrthoDB" id="9776710at2"/>
<dbReference type="PhylomeDB" id="P0ABK2"/>
<dbReference type="BioCyc" id="EcoCyc:CYDB-MONOMER"/>
<dbReference type="BioCyc" id="MetaCyc:CYDB-MONOMER"/>
<dbReference type="BRENDA" id="7.1.1.7">
    <property type="organism ID" value="2026"/>
</dbReference>
<dbReference type="UniPathway" id="UPA00705"/>
<dbReference type="PRO" id="PR:P0ABK2"/>
<dbReference type="Proteomes" id="UP000000625">
    <property type="component" value="Chromosome"/>
</dbReference>
<dbReference type="GO" id="GO:0070069">
    <property type="term" value="C:cytochrome complex"/>
    <property type="evidence" value="ECO:0000314"/>
    <property type="project" value="ComplexPortal"/>
</dbReference>
<dbReference type="GO" id="GO:0016020">
    <property type="term" value="C:membrane"/>
    <property type="evidence" value="ECO:0000314"/>
    <property type="project" value="ComplexPortal"/>
</dbReference>
<dbReference type="GO" id="GO:0005886">
    <property type="term" value="C:plasma membrane"/>
    <property type="evidence" value="ECO:0000314"/>
    <property type="project" value="EcoCyc"/>
</dbReference>
<dbReference type="GO" id="GO:0009055">
    <property type="term" value="F:electron transfer activity"/>
    <property type="evidence" value="ECO:0000314"/>
    <property type="project" value="EcoCyc"/>
</dbReference>
<dbReference type="GO" id="GO:0046872">
    <property type="term" value="F:metal ion binding"/>
    <property type="evidence" value="ECO:0007669"/>
    <property type="project" value="UniProtKB-KW"/>
</dbReference>
<dbReference type="GO" id="GO:0016682">
    <property type="term" value="F:oxidoreductase activity, acting on diphenols and related substances as donors, oxygen as acceptor"/>
    <property type="evidence" value="ECO:0000314"/>
    <property type="project" value="EcoCyc"/>
</dbReference>
<dbReference type="GO" id="GO:0019646">
    <property type="term" value="P:aerobic electron transport chain"/>
    <property type="evidence" value="ECO:0000314"/>
    <property type="project" value="EcoCyc"/>
</dbReference>
<dbReference type="GO" id="GO:0006119">
    <property type="term" value="P:oxidative phosphorylation"/>
    <property type="evidence" value="ECO:0000303"/>
    <property type="project" value="ComplexPortal"/>
</dbReference>
<dbReference type="InterPro" id="IPR003317">
    <property type="entry name" value="Cyt-d_oxidase_su2"/>
</dbReference>
<dbReference type="NCBIfam" id="TIGR00203">
    <property type="entry name" value="cydB"/>
    <property type="match status" value="1"/>
</dbReference>
<dbReference type="NCBIfam" id="NF011579">
    <property type="entry name" value="PRK15003.1"/>
    <property type="match status" value="1"/>
</dbReference>
<dbReference type="PANTHER" id="PTHR43141:SF5">
    <property type="entry name" value="CYTOCHROME BD-I UBIQUINOL OXIDASE SUBUNIT 2"/>
    <property type="match status" value="1"/>
</dbReference>
<dbReference type="PANTHER" id="PTHR43141">
    <property type="entry name" value="CYTOCHROME BD2 SUBUNIT II"/>
    <property type="match status" value="1"/>
</dbReference>
<dbReference type="Pfam" id="PF02322">
    <property type="entry name" value="Cyt_bd_oxida_II"/>
    <property type="match status" value="1"/>
</dbReference>
<dbReference type="PIRSF" id="PIRSF000267">
    <property type="entry name" value="Cyt_oxidse_sub2"/>
    <property type="match status" value="1"/>
</dbReference>
<reference key="1">
    <citation type="journal article" date="1988" name="J. Biol. Chem.">
        <title>The nucleotide sequence of the cyd locus encoding the two subunits of the cytochrome d terminal oxidase complex of Escherichia coli.</title>
        <authorList>
            <person name="Green G.N."/>
            <person name="Fang H."/>
            <person name="Lin R.-J."/>
            <person name="Newton G."/>
            <person name="Mather M."/>
            <person name="Georgiou C.D."/>
            <person name="Gennis R.B."/>
        </authorList>
    </citation>
    <scope>NUCLEOTIDE SEQUENCE [GENOMIC DNA]</scope>
    <source>
        <strain>K12</strain>
    </source>
</reference>
<reference key="2">
    <citation type="journal article" date="1996" name="DNA Res.">
        <title>A 718-kb DNA sequence of the Escherichia coli K-12 genome corresponding to the 12.7-28.0 min region on the linkage map.</title>
        <authorList>
            <person name="Oshima T."/>
            <person name="Aiba H."/>
            <person name="Baba T."/>
            <person name="Fujita K."/>
            <person name="Hayashi K."/>
            <person name="Honjo A."/>
            <person name="Ikemoto K."/>
            <person name="Inada T."/>
            <person name="Itoh T."/>
            <person name="Kajihara M."/>
            <person name="Kanai K."/>
            <person name="Kashimoto K."/>
            <person name="Kimura S."/>
            <person name="Kitagawa M."/>
            <person name="Makino K."/>
            <person name="Masuda S."/>
            <person name="Miki T."/>
            <person name="Mizobuchi K."/>
            <person name="Mori H."/>
            <person name="Motomura K."/>
            <person name="Nakamura Y."/>
            <person name="Nashimoto H."/>
            <person name="Nishio Y."/>
            <person name="Saito N."/>
            <person name="Sampei G."/>
            <person name="Seki Y."/>
            <person name="Tagami H."/>
            <person name="Takemoto K."/>
            <person name="Wada C."/>
            <person name="Yamamoto Y."/>
            <person name="Yano M."/>
            <person name="Horiuchi T."/>
        </authorList>
    </citation>
    <scope>NUCLEOTIDE SEQUENCE [LARGE SCALE GENOMIC DNA]</scope>
    <source>
        <strain>K12 / W3110 / ATCC 27325 / DSM 5911</strain>
    </source>
</reference>
<reference key="3">
    <citation type="journal article" date="1997" name="Science">
        <title>The complete genome sequence of Escherichia coli K-12.</title>
        <authorList>
            <person name="Blattner F.R."/>
            <person name="Plunkett G. III"/>
            <person name="Bloch C.A."/>
            <person name="Perna N.T."/>
            <person name="Burland V."/>
            <person name="Riley M."/>
            <person name="Collado-Vides J."/>
            <person name="Glasner J.D."/>
            <person name="Rode C.K."/>
            <person name="Mayhew G.F."/>
            <person name="Gregor J."/>
            <person name="Davis N.W."/>
            <person name="Kirkpatrick H.A."/>
            <person name="Goeden M.A."/>
            <person name="Rose D.J."/>
            <person name="Mau B."/>
            <person name="Shao Y."/>
        </authorList>
    </citation>
    <scope>NUCLEOTIDE SEQUENCE [LARGE SCALE GENOMIC DNA]</scope>
    <source>
        <strain>K12 / MG1655 / ATCC 47076</strain>
    </source>
</reference>
<reference key="4">
    <citation type="journal article" date="2006" name="Mol. Syst. Biol.">
        <title>Highly accurate genome sequences of Escherichia coli K-12 strains MG1655 and W3110.</title>
        <authorList>
            <person name="Hayashi K."/>
            <person name="Morooka N."/>
            <person name="Yamamoto Y."/>
            <person name="Fujita K."/>
            <person name="Isono K."/>
            <person name="Choi S."/>
            <person name="Ohtsubo E."/>
            <person name="Baba T."/>
            <person name="Wanner B.L."/>
            <person name="Mori H."/>
            <person name="Horiuchi T."/>
        </authorList>
    </citation>
    <scope>NUCLEOTIDE SEQUENCE [LARGE SCALE GENOMIC DNA]</scope>
    <source>
        <strain>K12 / W3110 / ATCC 27325 / DSM 5911</strain>
    </source>
</reference>
<reference key="5">
    <citation type="journal article" date="1988" name="J. Biol. Chem.">
        <title>The active form of the cytochrome d terminal oxidase complex of Escherichia coli is a heterodimer containing one copy of each of the two subunits.</title>
        <authorList>
            <person name="Miller M.J."/>
            <person name="Hermodson M."/>
            <person name="Gennis R.B."/>
        </authorList>
    </citation>
    <scope>PROTEIN SEQUENCE OF 1-6</scope>
    <scope>FORMYLATION AT MET-1</scope>
    <scope>SUBUNIT</scope>
    <source>
        <strain>MR43L/F152</strain>
    </source>
</reference>
<reference key="6">
    <citation type="submission" date="1995-07" db="EMBL/GenBank/DDBJ databases">
        <authorList>
            <person name="Kim K."/>
            <person name="Allen E."/>
            <person name="Araujo R."/>
            <person name="Aparicio A.M."/>
            <person name="Botstein D."/>
            <person name="Cherry M."/>
            <person name="Chung E."/>
            <person name="Dietrich F."/>
            <person name="Duncan M."/>
            <person name="Federspiel N."/>
            <person name="Kalman S."/>
            <person name="Komp C."/>
            <person name="Lashkari D."/>
            <person name="Lew H."/>
            <person name="Lin D."/>
            <person name="Namath A."/>
            <person name="Oefner P."/>
            <person name="Davis R."/>
        </authorList>
    </citation>
    <scope>NUCLEOTIDE SEQUENCE [GENOMIC DNA] OF 361-379</scope>
    <source>
        <strain>K12 / MG1655 / ATCC 47076</strain>
    </source>
</reference>
<reference key="7">
    <citation type="journal article" date="1983" name="J. Biol. Chem.">
        <title>The purification and characterization of the cytochrome d terminal oxidase complex of the Escherichia coli aerobic respiratory chain.</title>
        <authorList>
            <person name="Miller M.J."/>
            <person name="Gennis R.B."/>
        </authorList>
    </citation>
    <scope>FUNCTION AS AN OXIDASE</scope>
    <scope>BIOPHYSICOCHEMICAL PROPERTIES</scope>
    <scope>ACTIVITY REGULATION</scope>
    <scope>COFACTOR</scope>
    <scope>SUBUNIT</scope>
    <scope>INDUCTION</scope>
    <source>
        <strain>MR43L/F152</strain>
    </source>
</reference>
<reference key="8">
    <citation type="journal article" date="1986" name="Biochemistry">
        <title>Specific overproduction and purification of the cytochrome b558 component of the cytochrome d complex from Escherichia coli.</title>
        <authorList>
            <person name="Green G.N."/>
            <person name="Lorence R.M."/>
            <person name="Gennis R.B."/>
        </authorList>
    </citation>
    <scope>DISRUPTION PHENOTYPE</scope>
</reference>
<reference key="9">
    <citation type="journal article" date="1986" name="Biochemistry">
        <title>Coulometric and spectroscopic analysis of the purified cytochrome d complex of Escherichia coli: evidence for the identification of 'cytochrome a1' as cytochrome b595.</title>
        <authorList>
            <person name="Lorence R.M."/>
            <person name="Koland J.G."/>
            <person name="Gennis R.B."/>
        </authorList>
    </citation>
    <scope>COFACTOR</scope>
    <source>
        <strain>MR43L/F152</strain>
    </source>
</reference>
<reference key="10">
    <citation type="journal article" date="1988" name="J. Biol. Chem.">
        <title>Beta-galactosidase gene fusions as probes for the cytoplasmic regions of subunits I and II of the membrane-bound cytochrome d terminal oxidase from Escherichia coli.</title>
        <authorList>
            <person name="Georgiou C.D."/>
            <person name="Dueweke T.J."/>
            <person name="Gennis R.B."/>
        </authorList>
    </citation>
    <scope>TOPOLOGY</scope>
</reference>
<reference key="11">
    <citation type="journal article" date="1989" name="J. Biol. Chem.">
        <title>Location of heme axial ligands in the cytochrome d terminal oxidase complex of Escherichia coli determined by site-directed mutagenesis.</title>
        <authorList>
            <person name="Fang H."/>
            <person name="Lin R.J."/>
            <person name="Gennis R.B."/>
        </authorList>
    </citation>
    <scope>COFACTOR</scope>
    <scope>MUTAGENESIS OF HIS-56; HIS-197; HIS-237 AND HIS-376</scope>
</reference>
<reference key="12">
    <citation type="journal article" date="1991" name="Biochemistry">
        <title>Properties of the two terminal oxidases of Escherichia coli.</title>
        <authorList>
            <person name="Puustinen A."/>
            <person name="Finel M."/>
            <person name="Haltia T."/>
            <person name="Gennis R.B."/>
            <person name="Wikstroem M."/>
        </authorList>
    </citation>
    <scope>CATALYTIC ACTIVITY</scope>
</reference>
<reference key="13">
    <citation type="journal article" date="2004" name="FEBS Lett.">
        <title>Gene fusions with beta-lactamase show that subunit I of the cytochrome bd quinol oxidase from E. coli has nine transmembrane helices with the O2 reactive site near the periplasmic surface.</title>
        <authorList>
            <person name="Zhang J."/>
            <person name="Barquera B."/>
            <person name="Gennis R.B."/>
        </authorList>
    </citation>
    <scope>SUBCELLULAR LOCATION</scope>
    <scope>TOPOLOGY</scope>
</reference>
<reference key="14">
    <citation type="journal article" date="2005" name="J. Biol. Chem.">
        <title>Protein complexes of the Escherichia coli cell envelope.</title>
        <authorList>
            <person name="Stenberg F."/>
            <person name="Chovanec P."/>
            <person name="Maslen S.L."/>
            <person name="Robinson C.V."/>
            <person name="Ilag L."/>
            <person name="von Heijne G."/>
            <person name="Daley D.O."/>
        </authorList>
    </citation>
    <scope>SUBUNIT</scope>
    <scope>SUBCELLULAR LOCATION</scope>
    <source>
        <strain>BL21-DE3</strain>
    </source>
</reference>
<reference key="15">
    <citation type="journal article" date="2005" name="Science">
        <title>Global topology analysis of the Escherichia coli inner membrane proteome.</title>
        <authorList>
            <person name="Daley D.O."/>
            <person name="Rapp M."/>
            <person name="Granseth E."/>
            <person name="Melen K."/>
            <person name="Drew D."/>
            <person name="von Heijne G."/>
        </authorList>
    </citation>
    <scope>TOPOLOGY [LARGE SCALE ANALYSIS]</scope>
    <source>
        <strain>K12 / MG1655 / ATCC 47076</strain>
    </source>
</reference>
<reference key="16">
    <citation type="journal article" date="2009" name="J. Bacteriol.">
        <title>Respiration of Escherichia coli can be fully uncoupled via the nonelectrogenic terminal cytochrome bd-II oxidase.</title>
        <authorList>
            <person name="Bekker M."/>
            <person name="de Vries S."/>
            <person name="Ter Beek A."/>
            <person name="Hellingwerf K.J."/>
            <person name="de Mattos M.J."/>
        </authorList>
    </citation>
    <scope>FUNCTION IN PROTON TRANSLOCATION</scope>
    <scope>DISRUPTION PHENOTYPE</scope>
    <source>
        <strain>K12</strain>
    </source>
</reference>
<reference key="17">
    <citation type="journal article" date="2009" name="Mol. Cell">
        <title>Hydroxyurea induces hydroxyl radical-mediated cell death in Escherichia coli.</title>
        <authorList>
            <person name="Davies B.W."/>
            <person name="Kohanski M.A."/>
            <person name="Simmons L.A."/>
            <person name="Winkler J.A."/>
            <person name="Collins J.J."/>
            <person name="Walker G.C."/>
        </authorList>
    </citation>
    <scope>ROLE IN HYDROXYUREA RESISTANCE</scope>
    <scope>DISRUPTION PHENOTYPE</scope>
    <source>
        <strain>K12 / MC4100 / ATCC 35695 / DSM 6574</strain>
    </source>
</reference>
<reference key="18">
    <citation type="journal article" date="2011" name="Proc. Natl. Acad. Sci. U.S.A.">
        <title>Aerobic respiratory chain of Escherichia coli is not allowed to work in fully uncoupled mode.</title>
        <authorList>
            <person name="Borisov V.B."/>
            <person name="Murali R."/>
            <person name="Verkhovskaya M.L."/>
            <person name="Bloch D.A."/>
            <person name="Han H."/>
            <person name="Gennis R.B."/>
            <person name="Verkhovsky M.I."/>
        </authorList>
    </citation>
    <scope>FUNCTION IN PROTON TRANSLOCATION</scope>
    <scope>DISRUPTION PHENOTYPE</scope>
    <source>
        <strain>K12</strain>
    </source>
</reference>
<reference key="19">
    <citation type="journal article" date="2013" name="J. Bacteriol.">
        <title>The Escherichia coli CydX protein is a member of the CydAB cytochrome bd oxidase complex and is required for cytochrome bd oxidase activity.</title>
        <authorList>
            <person name="Vanorsdel C.E."/>
            <person name="Bhatt S."/>
            <person name="Allen R.J."/>
            <person name="Brenner E.P."/>
            <person name="Hobson J.J."/>
            <person name="Jamil A."/>
            <person name="Haynes B.M."/>
            <person name="Genson A.M."/>
            <person name="Hemm M.R."/>
        </authorList>
    </citation>
    <scope>PROBABLE INTERACTION WITH CYDX</scope>
    <scope>POSSIBLE INTERACTION WITH APPX</scope>
    <scope>SUBUNIT</scope>
    <scope>DISRUPTION PHENOTYPE</scope>
    <source>
        <strain>K12 / MG1655 / ATCC 47076</strain>
    </source>
</reference>
<reference key="20">
    <citation type="journal article" date="2011" name="Biochim. Biophys. Acta">
        <title>The cytochrome bd respiratory oxygen reductases.</title>
        <authorList>
            <person name="Borisov V.B."/>
            <person name="Gennis R.B."/>
            <person name="Hemp J."/>
            <person name="Verkhovsky M.I."/>
        </authorList>
    </citation>
    <scope>REVIEW</scope>
</reference>
<organism>
    <name type="scientific">Escherichia coli (strain K12)</name>
    <dbReference type="NCBI Taxonomy" id="83333"/>
    <lineage>
        <taxon>Bacteria</taxon>
        <taxon>Pseudomonadati</taxon>
        <taxon>Pseudomonadota</taxon>
        <taxon>Gammaproteobacteria</taxon>
        <taxon>Enterobacterales</taxon>
        <taxon>Enterobacteriaceae</taxon>
        <taxon>Escherichia</taxon>
    </lineage>
</organism>
<feature type="chain" id="PRO_0000183925" description="Cytochrome bd-I ubiquinol oxidase subunit 2">
    <location>
        <begin position="1"/>
        <end position="379"/>
    </location>
</feature>
<feature type="topological domain" description="Cytoplasmic" evidence="14">
    <location>
        <begin position="1"/>
        <end position="8"/>
    </location>
</feature>
<feature type="transmembrane region" description="Helical" evidence="14">
    <location>
        <begin position="9"/>
        <end position="28"/>
    </location>
</feature>
<feature type="topological domain" description="Periplasmic" evidence="14">
    <location>
        <begin position="29"/>
        <end position="79"/>
    </location>
</feature>
<feature type="transmembrane region" description="Helical" evidence="14">
    <location>
        <begin position="80"/>
        <end position="99"/>
    </location>
</feature>
<feature type="topological domain" description="Cytoplasmic" evidence="14">
    <location>
        <begin position="100"/>
        <end position="122"/>
    </location>
</feature>
<feature type="transmembrane region" description="Helical" evidence="14">
    <location>
        <begin position="123"/>
        <end position="142"/>
    </location>
</feature>
<feature type="topological domain" description="Periplasmic" evidence="14">
    <location>
        <begin position="143"/>
        <end position="164"/>
    </location>
</feature>
<feature type="transmembrane region" description="Helical" evidence="14">
    <location>
        <begin position="165"/>
        <end position="184"/>
    </location>
</feature>
<feature type="topological domain" description="Cytoplasmic" evidence="14">
    <location>
        <begin position="185"/>
        <end position="205"/>
    </location>
</feature>
<feature type="transmembrane region" description="Helical" evidence="14">
    <location>
        <begin position="206"/>
        <end position="225"/>
    </location>
</feature>
<feature type="topological domain" description="Periplasmic" evidence="14">
    <location>
        <begin position="226"/>
        <end position="262"/>
    </location>
</feature>
<feature type="transmembrane region" description="Helical" evidence="14">
    <location>
        <begin position="263"/>
        <end position="282"/>
    </location>
</feature>
<feature type="topological domain" description="Cytoplasmic" evidence="14">
    <location>
        <begin position="283"/>
        <end position="292"/>
    </location>
</feature>
<feature type="transmembrane region" description="Helical" evidence="14">
    <location>
        <begin position="293"/>
        <end position="312"/>
    </location>
</feature>
<feature type="topological domain" description="Periplasmic" evidence="14">
    <location>
        <begin position="313"/>
        <end position="336"/>
    </location>
</feature>
<feature type="transmembrane region" description="Helical" evidence="14">
    <location>
        <begin position="337"/>
        <end position="356"/>
    </location>
</feature>
<feature type="topological domain" description="Cytoplasmic" evidence="14">
    <location>
        <begin position="357"/>
        <end position="379"/>
    </location>
</feature>
<feature type="modified residue" description="N-formylmethionine" evidence="12">
    <location>
        <position position="1"/>
    </location>
</feature>
<feature type="mutagenesis site" description="No effect." evidence="9">
    <original>H</original>
    <variation>L</variation>
    <location>
        <position position="56"/>
    </location>
</feature>
<feature type="mutagenesis site" description="No effect." evidence="9">
    <original>H</original>
    <variation>L</variation>
    <location>
        <position position="197"/>
    </location>
</feature>
<feature type="mutagenesis site" description="No effect." evidence="9">
    <original>H</original>
    <variation>L</variation>
    <variation>R</variation>
    <location>
        <position position="237"/>
    </location>
</feature>
<feature type="mutagenesis site" description="No effect." evidence="9">
    <original>H</original>
    <variation>P</variation>
    <location>
        <position position="376"/>
    </location>
</feature>
<feature type="helix" evidence="15">
    <location>
        <begin position="4"/>
        <end position="25"/>
    </location>
</feature>
<feature type="helix" evidence="15">
    <location>
        <begin position="27"/>
        <end position="35"/>
    </location>
</feature>
<feature type="turn" evidence="15">
    <location>
        <begin position="36"/>
        <end position="38"/>
    </location>
</feature>
<feature type="helix" evidence="15">
    <location>
        <begin position="43"/>
        <end position="53"/>
    </location>
</feature>
<feature type="turn" evidence="15">
    <location>
        <begin position="54"/>
        <end position="56"/>
    </location>
</feature>
<feature type="helix" evidence="15">
    <location>
        <begin position="57"/>
        <end position="60"/>
    </location>
</feature>
<feature type="helix" evidence="15">
    <location>
        <begin position="62"/>
        <end position="74"/>
    </location>
</feature>
<feature type="helix" evidence="15">
    <location>
        <begin position="76"/>
        <end position="85"/>
    </location>
</feature>
<feature type="helix" evidence="15">
    <location>
        <begin position="87"/>
        <end position="97"/>
    </location>
</feature>
<feature type="helix" evidence="15">
    <location>
        <begin position="99"/>
        <end position="106"/>
    </location>
</feature>
<feature type="turn" evidence="15">
    <location>
        <begin position="107"/>
        <end position="109"/>
    </location>
</feature>
<feature type="helix" evidence="15">
    <location>
        <begin position="113"/>
        <end position="141"/>
    </location>
</feature>
<feature type="strand" evidence="15">
    <location>
        <begin position="147"/>
        <end position="149"/>
    </location>
</feature>
<feature type="strand" evidence="16">
    <location>
        <begin position="151"/>
        <end position="153"/>
    </location>
</feature>
<feature type="strand" evidence="15">
    <location>
        <begin position="155"/>
        <end position="157"/>
    </location>
</feature>
<feature type="helix" evidence="15">
    <location>
        <begin position="161"/>
        <end position="163"/>
    </location>
</feature>
<feature type="helix" evidence="15">
    <location>
        <begin position="167"/>
        <end position="191"/>
    </location>
</feature>
<feature type="helix" evidence="15">
    <location>
        <begin position="194"/>
        <end position="223"/>
    </location>
</feature>
<feature type="strand" evidence="15">
    <location>
        <begin position="227"/>
        <end position="231"/>
    </location>
</feature>
<feature type="strand" evidence="16">
    <location>
        <begin position="237"/>
        <end position="239"/>
    </location>
</feature>
<feature type="helix" evidence="16">
    <location>
        <begin position="244"/>
        <end position="246"/>
    </location>
</feature>
<feature type="strand" evidence="15">
    <location>
        <begin position="248"/>
        <end position="252"/>
    </location>
</feature>
<feature type="helix" evidence="15">
    <location>
        <begin position="254"/>
        <end position="256"/>
    </location>
</feature>
<feature type="helix" evidence="15">
    <location>
        <begin position="257"/>
        <end position="261"/>
    </location>
</feature>
<feature type="helix" evidence="15">
    <location>
        <begin position="263"/>
        <end position="266"/>
    </location>
</feature>
<feature type="helix" evidence="15">
    <location>
        <begin position="267"/>
        <end position="284"/>
    </location>
</feature>
<feature type="helix" evidence="15">
    <location>
        <begin position="288"/>
        <end position="310"/>
    </location>
</feature>
<feature type="strand" evidence="15">
    <location>
        <begin position="313"/>
        <end position="315"/>
    </location>
</feature>
<feature type="strand" evidence="15">
    <location>
        <begin position="317"/>
        <end position="320"/>
    </location>
</feature>
<feature type="turn" evidence="15">
    <location>
        <begin position="327"/>
        <end position="329"/>
    </location>
</feature>
<feature type="helix" evidence="15">
    <location>
        <begin position="334"/>
        <end position="361"/>
    </location>
</feature>
<feature type="helix" evidence="15">
    <location>
        <begin position="368"/>
        <end position="373"/>
    </location>
</feature>
<feature type="turn" evidence="15">
    <location>
        <begin position="374"/>
        <end position="377"/>
    </location>
</feature>
<comment type="function">
    <text evidence="5 7 13">A terminal oxidase that produces a proton motive force by the vectorial transfer of protons across the inner membrane. It is the component of the aerobic respiratory chain of E.coli that predominates when cells are grown at low aeration. Generates a proton motive force using protons and electrons from opposite sides of the membrane to generate H(2)O, transferring 1 proton/electron.</text>
</comment>
<comment type="catalytic activity">
    <reaction evidence="4">
        <text>2 a ubiquinol + O2(in) + 4 H(+)(in) = 2 a ubiquinone + 2 H2O(in) + 4 H(+)(out)</text>
        <dbReference type="Rhea" id="RHEA:40527"/>
        <dbReference type="Rhea" id="RHEA-COMP:9565"/>
        <dbReference type="Rhea" id="RHEA-COMP:9566"/>
        <dbReference type="ChEBI" id="CHEBI:15377"/>
        <dbReference type="ChEBI" id="CHEBI:15378"/>
        <dbReference type="ChEBI" id="CHEBI:15379"/>
        <dbReference type="ChEBI" id="CHEBI:16389"/>
        <dbReference type="ChEBI" id="CHEBI:17976"/>
        <dbReference type="EC" id="7.1.1.7"/>
    </reaction>
</comment>
<comment type="cofactor">
    <cofactor evidence="9 11 13">
        <name>heme b</name>
        <dbReference type="ChEBI" id="CHEBI:60344"/>
    </cofactor>
    <text evidence="9 11 13">Binds 1 protoheme IX center (heme b595, originally called cytochrome a1) per heterodimer, in conjunction with CydA.</text>
</comment>
<comment type="cofactor">
    <cofactor evidence="9 11 13">
        <name>heme d cis-diol</name>
        <dbReference type="ChEBI" id="CHEBI:62814"/>
    </cofactor>
    <text evidence="9 11 13">Binds 1 iron-chlorin (heme d or cytochrome d) per heterodimer, in conjunction with CydA.</text>
</comment>
<comment type="activity regulation">
    <text evidence="13">90% inhibited by cyanide and 2-heptyl-4-hydroxyquinoline N-oxide, at 1 mM and 40 uM respectively.</text>
</comment>
<comment type="biophysicochemical properties">
    <kinetics>
        <KM evidence="13">0.1 mM for ubiquinol-1</KM>
        <KM evidence="13">0.28 mM for 2,3,5,6-tetramethyl-p-phenylenediamine</KM>
        <KM evidence="13">0.68 mM for N,N,N',N'-tetramethyl-p-phenylenediamine</KM>
        <Vmax evidence="13">383.0 umol/min/mg enzyme for ubiquinol-1</Vmax>
        <Vmax evidence="13">270.0 umol/min/mg enzyme for 2,3,5,6-tetramethyl-p-phenylenediamine</Vmax>
        <Vmax evidence="13">126.0 umol/min/mg enzyme for N,N,N',N'-tetramethyl-p-phenylenediamine</Vmax>
        <text>pH 7.0, 37 degrees Celsius.</text>
    </kinetics>
</comment>
<comment type="pathway">
    <text>Energy metabolism; oxidative phosphorylation.</text>
</comment>
<comment type="subunit">
    <text evidence="3 8 12 13">Heterodimer of subunits I and II. Probably interacts with CydX, and overexpressed AppX.</text>
</comment>
<comment type="interaction">
    <interactant intactId="EBI-1213195">
        <id>P0ABK2</id>
    </interactant>
    <interactant intactId="EBI-906928">
        <id>P0ABJ9</id>
        <label>cydA</label>
    </interactant>
    <organismsDiffer>false</organismsDiffer>
    <experiments>5</experiments>
</comment>
<comment type="subcellular location">
    <subcellularLocation>
        <location evidence="1 3">Cell inner membrane</location>
        <topology evidence="1 3">Multi-pass membrane protein</topology>
    </subcellularLocation>
    <text evidence="1 2">The displayed topology is based on (PubMed:15013751) not the large scale studies (PubMed:15919996).</text>
</comment>
<comment type="induction">
    <text evidence="13">Under conditions of low aeration, in stationary phase (at protein level).</text>
</comment>
<comment type="PTM">
    <text>The N-terminus is blocked.</text>
</comment>
<comment type="disruption phenotype">
    <text evidence="5 6 7 8 10">Loss of cytochrome b595 and d from enzyme preparations (PubMed:3013298). A double cydA/cydB deletion shows increased sensitivity to reductant (beta-mercapoethanol) (PubMed:23749980). Greatly increased resistance to hydroxyurea, probably due to decreased OH radical formation as an electron transport chain is disrupted (PubMed:20005847).</text>
</comment>
<comment type="similarity">
    <text evidence="14">Belongs to the cytochrome ubiquinol oxidase subunit 2 family.</text>
</comment>
<gene>
    <name type="primary">cydB</name>
    <name type="synonym">cyd-2</name>
    <name type="ordered locus">b0734</name>
    <name type="ordered locus">JW0723</name>
</gene>
<name>CYDB_ECOLI</name>